<name>DAO_RUBXD</name>
<protein>
    <recommendedName>
        <fullName evidence="5">D-amino-acid oxidase</fullName>
        <shortName evidence="6">DAAO</shortName>
        <shortName evidence="6">DAMOX</shortName>
        <shortName evidence="6">DAO</shortName>
        <ecNumber evidence="4">1.4.3.3</ecNumber>
    </recommendedName>
</protein>
<gene>
    <name evidence="6" type="primary">dao</name>
    <name evidence="7" type="ordered locus">Rxyl_0526</name>
</gene>
<keyword id="KW-0134">Cell wall</keyword>
<keyword id="KW-0963">Cytoplasm</keyword>
<keyword id="KW-0274">FAD</keyword>
<keyword id="KW-0285">Flavoprotein</keyword>
<keyword id="KW-0560">Oxidoreductase</keyword>
<keyword id="KW-1185">Reference proteome</keyword>
<keyword id="KW-0964">Secreted</keyword>
<accession>Q1AYM8</accession>
<evidence type="ECO:0000250" key="1">
    <source>
        <dbReference type="UniProtKB" id="A5U3S4"/>
    </source>
</evidence>
<evidence type="ECO:0000250" key="2">
    <source>
        <dbReference type="UniProtKB" id="P00371"/>
    </source>
</evidence>
<evidence type="ECO:0000250" key="3">
    <source>
        <dbReference type="UniProtKB" id="P14920"/>
    </source>
</evidence>
<evidence type="ECO:0000269" key="4">
    <source>
    </source>
</evidence>
<evidence type="ECO:0000303" key="5">
    <source>
    </source>
</evidence>
<evidence type="ECO:0000305" key="6"/>
<evidence type="ECO:0000312" key="7">
    <source>
        <dbReference type="EMBL" id="ABG03500.1"/>
    </source>
</evidence>
<evidence type="ECO:0000312" key="8">
    <source>
        <dbReference type="Proteomes" id="UP000006637"/>
    </source>
</evidence>
<comment type="function">
    <text evidence="4">Catalyzes the oxidative deamination of D-amino acids with broad substrate specificity.</text>
</comment>
<comment type="catalytic activity">
    <reaction evidence="4">
        <text>a D-alpha-amino acid + O2 + H2O = a 2-oxocarboxylate + H2O2 + NH4(+)</text>
        <dbReference type="Rhea" id="RHEA:21816"/>
        <dbReference type="ChEBI" id="CHEBI:15377"/>
        <dbReference type="ChEBI" id="CHEBI:15379"/>
        <dbReference type="ChEBI" id="CHEBI:16240"/>
        <dbReference type="ChEBI" id="CHEBI:28938"/>
        <dbReference type="ChEBI" id="CHEBI:35179"/>
        <dbReference type="ChEBI" id="CHEBI:59871"/>
        <dbReference type="EC" id="1.4.3.3"/>
    </reaction>
    <physiologicalReaction direction="left-to-right" evidence="4">
        <dbReference type="Rhea" id="RHEA:21817"/>
    </physiologicalReaction>
</comment>
<comment type="catalytic activity">
    <reaction evidence="4">
        <text>D-valine + O2 + H2O = 3-methyl-2-oxobutanoate + H2O2 + NH4(+)</text>
        <dbReference type="Rhea" id="RHEA:78203"/>
        <dbReference type="ChEBI" id="CHEBI:11851"/>
        <dbReference type="ChEBI" id="CHEBI:15377"/>
        <dbReference type="ChEBI" id="CHEBI:15379"/>
        <dbReference type="ChEBI" id="CHEBI:16240"/>
        <dbReference type="ChEBI" id="CHEBI:28938"/>
        <dbReference type="ChEBI" id="CHEBI:74338"/>
    </reaction>
    <physiologicalReaction direction="left-to-right" evidence="4">
        <dbReference type="Rhea" id="RHEA:78204"/>
    </physiologicalReaction>
</comment>
<comment type="catalytic activity">
    <reaction evidence="4">
        <text>D-leucine + O2 + H2O = 4-methyl-2-oxopentanoate + H2O2 + NH4(+)</text>
        <dbReference type="Rhea" id="RHEA:78211"/>
        <dbReference type="ChEBI" id="CHEBI:15377"/>
        <dbReference type="ChEBI" id="CHEBI:15379"/>
        <dbReference type="ChEBI" id="CHEBI:16240"/>
        <dbReference type="ChEBI" id="CHEBI:17865"/>
        <dbReference type="ChEBI" id="CHEBI:28938"/>
        <dbReference type="ChEBI" id="CHEBI:143079"/>
    </reaction>
    <physiologicalReaction direction="left-to-right" evidence="4">
        <dbReference type="Rhea" id="RHEA:78212"/>
    </physiologicalReaction>
</comment>
<comment type="catalytic activity">
    <reaction evidence="4">
        <text>D-isoleucine + O2 + H2O = (R)-3-methyl-2-oxopentanoate + H2O2 + NH4(+)</text>
        <dbReference type="Rhea" id="RHEA:78235"/>
        <dbReference type="ChEBI" id="CHEBI:15377"/>
        <dbReference type="ChEBI" id="CHEBI:15379"/>
        <dbReference type="ChEBI" id="CHEBI:16240"/>
        <dbReference type="ChEBI" id="CHEBI:28938"/>
        <dbReference type="ChEBI" id="CHEBI:193151"/>
        <dbReference type="ChEBI" id="CHEBI:228255"/>
    </reaction>
    <physiologicalReaction direction="left-to-right" evidence="4">
        <dbReference type="Rhea" id="RHEA:78236"/>
    </physiologicalReaction>
</comment>
<comment type="catalytic activity">
    <reaction evidence="4">
        <text>D-tyrosine + O2 + H2O = 3-(4-hydroxyphenyl)pyruvate + H2O2 + NH4(+)</text>
        <dbReference type="Rhea" id="RHEA:70959"/>
        <dbReference type="ChEBI" id="CHEBI:15377"/>
        <dbReference type="ChEBI" id="CHEBI:15379"/>
        <dbReference type="ChEBI" id="CHEBI:16240"/>
        <dbReference type="ChEBI" id="CHEBI:28938"/>
        <dbReference type="ChEBI" id="CHEBI:36242"/>
        <dbReference type="ChEBI" id="CHEBI:58570"/>
    </reaction>
    <physiologicalReaction direction="left-to-right" evidence="4">
        <dbReference type="Rhea" id="RHEA:70960"/>
    </physiologicalReaction>
</comment>
<comment type="catalytic activity">
    <reaction evidence="4">
        <text>D-threonine + O2 + H2O = (S)-3-hydroxy-2-oxobutanoate + H2O2 + NH4(+)</text>
        <dbReference type="Rhea" id="RHEA:78251"/>
        <dbReference type="ChEBI" id="CHEBI:15377"/>
        <dbReference type="ChEBI" id="CHEBI:15379"/>
        <dbReference type="ChEBI" id="CHEBI:16240"/>
        <dbReference type="ChEBI" id="CHEBI:28938"/>
        <dbReference type="ChEBI" id="CHEBI:57757"/>
        <dbReference type="ChEBI" id="CHEBI:228256"/>
    </reaction>
    <physiologicalReaction direction="left-to-right" evidence="4">
        <dbReference type="Rhea" id="RHEA:78252"/>
    </physiologicalReaction>
</comment>
<comment type="cofactor">
    <cofactor evidence="4">
        <name>FAD</name>
        <dbReference type="ChEBI" id="CHEBI:57692"/>
    </cofactor>
</comment>
<comment type="activity regulation">
    <text evidence="4">Inhibited by benzoate and phenylmethylsulfonyl fluoride (PMSF) (PubMed:25217016). Weakly inhibited by anthranilate, crotonate, and the amino acid-modifying agents dithionitrobenzoic acid and diethyl pyrocarbonate (PubMed:25217016). Not inhibited by malonate, meso-tartrate, D-malate, or the amino acid-modifying agents iodoacetic acid or butane-2,3-dione (PubMed:25217016).</text>
</comment>
<comment type="biophysicochemical properties">
    <kinetics>
        <KM evidence="4">0.197 mM for D-tyrosine (at 60 degrees Celsius and at pH 8.0)</KM>
        <KM evidence="4">0.094 mM for D-valine (at 60 degrees Celsius and at pH 8.0)</KM>
        <KM evidence="4">0.049 mM for D-leucine (at 60 degrees Celsius and at pH 8.0)</KM>
        <KM evidence="4">0.052 mM for D-isoleucine (at 60 degrees Celsius and at pH 8.0)</KM>
        <KM evidence="4">8.16 mM for D-threonine (at 60 degrees Celsius and at pH 8.0)</KM>
        <text evidence="4">kcat is 53 sec(-1) with D-tyrosine as substrate (at 60 degrees Celsius and at pH 8.0) (PubMed:25217016). kcat is 31.4 sec(-1) with D-valine as substrate (at 60 degrees Celsius and at pH 8.0) (PubMed:25217016). kcat is 24 sec(-1) with D-leucine as substrate (at 60 degrees Celsius and at pH 8.0) (PubMed:25217016). kcat is 23 sec(-1) with D-isoleucine as substrate (at 60 degrees Celsius and at pH 8.0) (PubMed:25217016). kcat is 7.6 sec(-1) with D-threonine as substrate (at 60 degrees Celsius and at pH 8.0) (PubMed:25217016).</text>
    </kinetics>
    <phDependence>
        <text evidence="4">Optimum pH is 7.5-10.</text>
    </phDependence>
    <temperatureDependence>
        <text evidence="4">Optimum temperature is 65 degrees Celsius.</text>
    </temperatureDependence>
</comment>
<comment type="subunit">
    <text evidence="4">Monomer.</text>
</comment>
<comment type="subcellular location">
    <subcellularLocation>
        <location evidence="1">Cytoplasm</location>
    </subcellularLocation>
    <subcellularLocation>
        <location evidence="1">Secreted</location>
        <location evidence="1">Cell wall</location>
    </subcellularLocation>
</comment>
<comment type="similarity">
    <text evidence="6">Belongs to the DAMOX/DASOX family.</text>
</comment>
<feature type="chain" id="PRO_0000460379" description="D-amino-acid oxidase">
    <location>
        <begin position="1"/>
        <end position="326"/>
    </location>
</feature>
<feature type="binding site" evidence="3">
    <location>
        <position position="18"/>
    </location>
    <ligand>
        <name>FAD</name>
        <dbReference type="ChEBI" id="CHEBI:57692"/>
    </ligand>
</feature>
<feature type="binding site" evidence="3">
    <location>
        <position position="19"/>
    </location>
    <ligand>
        <name>FAD</name>
        <dbReference type="ChEBI" id="CHEBI:57692"/>
    </ligand>
</feature>
<feature type="binding site" evidence="3">
    <location>
        <position position="46"/>
    </location>
    <ligand>
        <name>FAD</name>
        <dbReference type="ChEBI" id="CHEBI:57692"/>
    </ligand>
</feature>
<feature type="binding site" evidence="3">
    <location>
        <position position="47"/>
    </location>
    <ligand>
        <name>FAD</name>
        <dbReference type="ChEBI" id="CHEBI:57692"/>
    </ligand>
</feature>
<feature type="binding site" evidence="3">
    <location>
        <position position="48"/>
    </location>
    <ligand>
        <name>FAD</name>
        <dbReference type="ChEBI" id="CHEBI:57692"/>
    </ligand>
</feature>
<feature type="binding site" evidence="2">
    <location>
        <position position="52"/>
    </location>
    <ligand>
        <name>FAD</name>
        <dbReference type="ChEBI" id="CHEBI:57692"/>
    </ligand>
</feature>
<feature type="binding site" evidence="3">
    <location>
        <position position="53"/>
    </location>
    <ligand>
        <name>FAD</name>
        <dbReference type="ChEBI" id="CHEBI:57692"/>
    </ligand>
</feature>
<feature type="binding site" evidence="3">
    <location>
        <position position="162"/>
    </location>
    <ligand>
        <name>FAD</name>
        <dbReference type="ChEBI" id="CHEBI:57692"/>
    </ligand>
</feature>
<feature type="binding site" evidence="3">
    <location>
        <position position="179"/>
    </location>
    <ligand>
        <name>FAD</name>
        <dbReference type="ChEBI" id="CHEBI:57692"/>
    </ligand>
</feature>
<feature type="binding site" evidence="2">
    <location>
        <position position="222"/>
    </location>
    <ligand>
        <name>D-proline</name>
        <dbReference type="ChEBI" id="CHEBI:57726"/>
    </ligand>
</feature>
<feature type="binding site" evidence="3">
    <location>
        <position position="222"/>
    </location>
    <ligand>
        <name>D-serine</name>
        <dbReference type="ChEBI" id="CHEBI:35247"/>
    </ligand>
</feature>
<feature type="binding site" evidence="2">
    <location>
        <position position="277"/>
    </location>
    <ligand>
        <name>D-proline</name>
        <dbReference type="ChEBI" id="CHEBI:57726"/>
    </ligand>
</feature>
<feature type="binding site" evidence="3">
    <location>
        <position position="277"/>
    </location>
    <ligand>
        <name>D-serine</name>
        <dbReference type="ChEBI" id="CHEBI:35247"/>
    </ligand>
</feature>
<feature type="binding site" evidence="3">
    <location>
        <position position="277"/>
    </location>
    <ligand>
        <name>FAD</name>
        <dbReference type="ChEBI" id="CHEBI:57692"/>
    </ligand>
</feature>
<feature type="binding site" evidence="3">
    <location>
        <position position="303"/>
    </location>
    <ligand>
        <name>FAD</name>
        <dbReference type="ChEBI" id="CHEBI:57692"/>
    </ligand>
</feature>
<feature type="binding site" evidence="2">
    <location>
        <position position="304"/>
    </location>
    <ligand>
        <name>D-proline</name>
        <dbReference type="ChEBI" id="CHEBI:57726"/>
    </ligand>
</feature>
<feature type="binding site" evidence="3">
    <location>
        <position position="304"/>
    </location>
    <ligand>
        <name>D-serine</name>
        <dbReference type="ChEBI" id="CHEBI:35247"/>
    </ligand>
</feature>
<feature type="binding site" evidence="3">
    <location>
        <position position="304"/>
    </location>
    <ligand>
        <name>FAD</name>
        <dbReference type="ChEBI" id="CHEBI:57692"/>
    </ligand>
</feature>
<feature type="binding site" evidence="3">
    <location>
        <position position="306"/>
    </location>
    <ligand>
        <name>FAD</name>
        <dbReference type="ChEBI" id="CHEBI:57692"/>
    </ligand>
</feature>
<feature type="binding site" evidence="3">
    <location>
        <position position="308"/>
    </location>
    <ligand>
        <name>FAD</name>
        <dbReference type="ChEBI" id="CHEBI:57692"/>
    </ligand>
</feature>
<organism evidence="8">
    <name type="scientific">Rubrobacter xylanophilus (strain DSM 9941 / JCM 11954 / NBRC 16129 / PRD-1)</name>
    <dbReference type="NCBI Taxonomy" id="266117"/>
    <lineage>
        <taxon>Bacteria</taxon>
        <taxon>Bacillati</taxon>
        <taxon>Actinomycetota</taxon>
        <taxon>Rubrobacteria</taxon>
        <taxon>Rubrobacterales</taxon>
        <taxon>Rubrobacteraceae</taxon>
        <taxon>Rubrobacter</taxon>
    </lineage>
</organism>
<reference evidence="8" key="1">
    <citation type="submission" date="2006-06" db="EMBL/GenBank/DDBJ databases">
        <title>Complete sequence of Rubrobacter xylanophilus DSM 9941.</title>
        <authorList>
            <consortium name="US DOE Joint Genome Institute"/>
            <person name="Copeland A."/>
            <person name="Lucas S."/>
            <person name="Lapidus A."/>
            <person name="Barry K."/>
            <person name="Detter J.C."/>
            <person name="Glavina del Rio T."/>
            <person name="Hammon N."/>
            <person name="Israni S."/>
            <person name="Dalin E."/>
            <person name="Tice H."/>
            <person name="Pitluck S."/>
            <person name="Munk A.C."/>
            <person name="Brettin T."/>
            <person name="Bruce D."/>
            <person name="Han C."/>
            <person name="Tapia R."/>
            <person name="Gilna P."/>
            <person name="Schmutz J."/>
            <person name="Larimer F."/>
            <person name="Land M."/>
            <person name="Hauser L."/>
            <person name="Kyrpides N."/>
            <person name="Lykidis A."/>
            <person name="da Costa M.S."/>
            <person name="Rainey F.A."/>
            <person name="Empadinhas N."/>
            <person name="Jolivet E."/>
            <person name="Battista J.R."/>
            <person name="Richardson P."/>
        </authorList>
    </citation>
    <scope>NUCLEOTIDE SEQUENCE [LARGE SCALE GENOMIC DNA]</scope>
    <source>
        <strain evidence="8">DSM 9941 / JCM 11954 / NBRC 16129 / PRD-1</strain>
    </source>
</reference>
<reference evidence="6" key="2">
    <citation type="journal article" date="2014" name="Appl. Environ. Microbiol.">
        <title>A Highly Stable D-Amino Acid Oxidase of the Thermophilic Bacterium Rubrobacter xylanophilus.</title>
        <authorList>
            <person name="Takahashi S."/>
            <person name="Furukawara M."/>
            <person name="Omae K."/>
            <person name="Tadokoro N."/>
            <person name="Saito Y."/>
            <person name="Abe K."/>
            <person name="Kera Y."/>
        </authorList>
    </citation>
    <scope>FUNCTION</scope>
    <scope>CATALYTIC ACTIVITY</scope>
    <scope>COFACTOR</scope>
    <scope>ACTIVITY REGULATION</scope>
    <scope>BIOPHYSICOCHEMICAL PROPERTIES</scope>
    <scope>SUBUNIT</scope>
    <source>
        <strain evidence="5">DSM 9941 / JCM 11954 / NBRC 16129 / PRD-1</strain>
    </source>
</reference>
<sequence length="326" mass="35039">MCGMRGRVVARAVVVGCGVAGLSAAIALRERGFGVRVVAREPPERTTSAVAAAVWYPYRAYPEERVLSWGARTFEVFRGLAADPRTGVRLGEGVELLRRSAPGEPWWREAVSGFRRCREEELPPGCRGGYRFVAPVAEMPAYLAYLLDRLRGAGGTLELREVSSLEEAGEGADVVVNCSGVWARELARDPSVFPIRGQILRVANPGLERFVLDEENPAGLTYIVPRSGDCVLGGTAEEGRWSTEPDPATAEAILRRCSALEPRLRGARVLEHRAGLRPGRPEVRLELEELPGGTPCVHNYGHGGSGVTLSWGCAEEAAALAGAALS</sequence>
<dbReference type="EC" id="1.4.3.3" evidence="4"/>
<dbReference type="EMBL" id="CP000386">
    <property type="protein sequence ID" value="ABG03500.1"/>
    <property type="molecule type" value="Genomic_DNA"/>
</dbReference>
<dbReference type="SMR" id="Q1AYM8"/>
<dbReference type="STRING" id="266117.Rxyl_0526"/>
<dbReference type="KEGG" id="rxy:Rxyl_0526"/>
<dbReference type="eggNOG" id="COG0665">
    <property type="taxonomic scope" value="Bacteria"/>
</dbReference>
<dbReference type="HOGENOM" id="CLU_034311_0_0_11"/>
<dbReference type="PhylomeDB" id="Q1AYM8"/>
<dbReference type="BRENDA" id="1.4.3.3">
    <property type="organism ID" value="10017"/>
</dbReference>
<dbReference type="Proteomes" id="UP000006637">
    <property type="component" value="Chromosome"/>
</dbReference>
<dbReference type="GO" id="GO:0005737">
    <property type="term" value="C:cytoplasm"/>
    <property type="evidence" value="ECO:0000250"/>
    <property type="project" value="UniProtKB"/>
</dbReference>
<dbReference type="GO" id="GO:0005576">
    <property type="term" value="C:extracellular region"/>
    <property type="evidence" value="ECO:0007669"/>
    <property type="project" value="UniProtKB-KW"/>
</dbReference>
<dbReference type="GO" id="GO:0009274">
    <property type="term" value="C:peptidoglycan-based cell wall"/>
    <property type="evidence" value="ECO:0000250"/>
    <property type="project" value="UniProtKB"/>
</dbReference>
<dbReference type="GO" id="GO:0003884">
    <property type="term" value="F:D-amino-acid oxidase activity"/>
    <property type="evidence" value="ECO:0000250"/>
    <property type="project" value="UniProtKB"/>
</dbReference>
<dbReference type="GO" id="GO:0071949">
    <property type="term" value="F:FAD binding"/>
    <property type="evidence" value="ECO:0000250"/>
    <property type="project" value="UniProtKB"/>
</dbReference>
<dbReference type="GO" id="GO:0019478">
    <property type="term" value="P:D-amino acid catabolic process"/>
    <property type="evidence" value="ECO:0000250"/>
    <property type="project" value="UniProtKB"/>
</dbReference>
<dbReference type="Gene3D" id="3.30.9.10">
    <property type="entry name" value="D-Amino Acid Oxidase, subunit A, domain 2"/>
    <property type="match status" value="1"/>
</dbReference>
<dbReference type="Gene3D" id="3.40.50.720">
    <property type="entry name" value="NAD(P)-binding Rossmann-like Domain"/>
    <property type="match status" value="1"/>
</dbReference>
<dbReference type="InterPro" id="IPR023209">
    <property type="entry name" value="DAO"/>
</dbReference>
<dbReference type="InterPro" id="IPR006076">
    <property type="entry name" value="FAD-dep_OxRdtase"/>
</dbReference>
<dbReference type="PANTHER" id="PTHR11530">
    <property type="entry name" value="D-AMINO ACID OXIDASE"/>
    <property type="match status" value="1"/>
</dbReference>
<dbReference type="PANTHER" id="PTHR11530:SF11">
    <property type="entry name" value="D-ASPARTATE OXIDASE"/>
    <property type="match status" value="1"/>
</dbReference>
<dbReference type="Pfam" id="PF01266">
    <property type="entry name" value="DAO"/>
    <property type="match status" value="1"/>
</dbReference>
<dbReference type="PIRSF" id="PIRSF000189">
    <property type="entry name" value="D-aa_oxidase"/>
    <property type="match status" value="1"/>
</dbReference>
<dbReference type="SUPFAM" id="SSF54373">
    <property type="entry name" value="FAD-linked reductases, C-terminal domain"/>
    <property type="match status" value="1"/>
</dbReference>
<dbReference type="SUPFAM" id="SSF51971">
    <property type="entry name" value="Nucleotide-binding domain"/>
    <property type="match status" value="1"/>
</dbReference>
<proteinExistence type="evidence at protein level"/>